<feature type="chain" id="PRO_0000384360" description="Mitochondrial distribution and morphology protein 34">
    <location>
        <begin position="1"/>
        <end position="603"/>
    </location>
</feature>
<feature type="domain" description="SMP-LTD" evidence="1">
    <location>
        <begin position="1"/>
        <end position="205"/>
    </location>
</feature>
<feature type="region of interest" description="Disordered" evidence="2">
    <location>
        <begin position="320"/>
        <end position="511"/>
    </location>
</feature>
<feature type="region of interest" description="Disordered" evidence="2">
    <location>
        <begin position="558"/>
        <end position="603"/>
    </location>
</feature>
<feature type="compositionally biased region" description="Low complexity" evidence="2">
    <location>
        <begin position="320"/>
        <end position="332"/>
    </location>
</feature>
<feature type="compositionally biased region" description="Polar residues" evidence="2">
    <location>
        <begin position="333"/>
        <end position="351"/>
    </location>
</feature>
<feature type="compositionally biased region" description="Basic and acidic residues" evidence="2">
    <location>
        <begin position="371"/>
        <end position="380"/>
    </location>
</feature>
<feature type="compositionally biased region" description="Polar residues" evidence="2">
    <location>
        <begin position="383"/>
        <end position="403"/>
    </location>
</feature>
<feature type="compositionally biased region" description="Low complexity" evidence="2">
    <location>
        <begin position="452"/>
        <end position="463"/>
    </location>
</feature>
<feature type="compositionally biased region" description="Polar residues" evidence="2">
    <location>
        <begin position="500"/>
        <end position="509"/>
    </location>
</feature>
<feature type="compositionally biased region" description="Basic and acidic residues" evidence="2">
    <location>
        <begin position="558"/>
        <end position="570"/>
    </location>
</feature>
<name>MDM34_PYRTR</name>
<gene>
    <name evidence="1" type="primary">mdm34</name>
    <name type="ORF">PTRG_00358</name>
</gene>
<organism>
    <name type="scientific">Pyrenophora tritici-repentis (strain Pt-1C-BFP)</name>
    <name type="common">Wheat tan spot fungus</name>
    <name type="synonym">Drechslera tritici-repentis</name>
    <dbReference type="NCBI Taxonomy" id="426418"/>
    <lineage>
        <taxon>Eukaryota</taxon>
        <taxon>Fungi</taxon>
        <taxon>Dikarya</taxon>
        <taxon>Ascomycota</taxon>
        <taxon>Pezizomycotina</taxon>
        <taxon>Dothideomycetes</taxon>
        <taxon>Pleosporomycetidae</taxon>
        <taxon>Pleosporales</taxon>
        <taxon>Pleosporineae</taxon>
        <taxon>Pleosporaceae</taxon>
        <taxon>Pyrenophora</taxon>
    </lineage>
</organism>
<keyword id="KW-0445">Lipid transport</keyword>
<keyword id="KW-0446">Lipid-binding</keyword>
<keyword id="KW-0472">Membrane</keyword>
<keyword id="KW-0496">Mitochondrion</keyword>
<keyword id="KW-1000">Mitochondrion outer membrane</keyword>
<keyword id="KW-1185">Reference proteome</keyword>
<keyword id="KW-0812">Transmembrane</keyword>
<keyword id="KW-1134">Transmembrane beta strand</keyword>
<keyword id="KW-0813">Transport</keyword>
<evidence type="ECO:0000255" key="1">
    <source>
        <dbReference type="HAMAP-Rule" id="MF_03105"/>
    </source>
</evidence>
<evidence type="ECO:0000256" key="2">
    <source>
        <dbReference type="SAM" id="MobiDB-lite"/>
    </source>
</evidence>
<sequence length="603" mass="65132">MAFNFNWSPLIADTSRARDMLTTALNKSPKPPIIVDDIIVTELNLGTTPPELEILEIGDLAEDRFRGIFKMSYAGDAFLTLKTKVQANPLKTYLSNKPDFASPQPLAAAAGLTIPLQITLSNIRLSGFVILVFSKQKGLTLVFRNDPLESLKVSSTFDSIPFVRDYLQKEIEGQLRVLFMEDLPAIIHRLSLRMLSPEYQEIETEERLEGANDTTAAIDPLASPPEDAVDAFGNPLDEAQISAMSLDSGEIHASFSQKNILRLAALSESQRTLSLFTPGIREAVFRAWAGHPDRAESGAATPALTQGSLSRIQSTFGSLKSGASSVASGSTGNETLSSRPTLASSYSTSAGISLGSGRSRAGGMRKRKKRVVDLRRKDGADSGVSTEANTPLPSTQVSDTSSVIPEEREAEEELATPPTSPPQPGRRFESRRGSLDVGTPKRIPEEPPTFGPLLAPAPLIPNASKAAKSKRTVSPPAHLEDPFVSHTSSRRPPISRNKLRQAQQSTSPLLRSLSFDKVSSLSALCSPPRISSPPNADLMSSSGGILEQAWMQKMAQEIARKVQEEKDKSSGQRRPSHSRTKTAPTGGFWQGEDEVEAPPAYVA</sequence>
<comment type="function">
    <text evidence="1">Component of the ERMES/MDM complex, which serves as a molecular tether to connect the endoplasmic reticulum (ER) and mitochondria. Components of this complex are involved in the control of mitochondrial shape and protein biogenesis, and function in nonvesicular lipid trafficking between the ER and mitochondria. Mdm34 is required for the interaction of the ER-resident membrane protein mmm1 and the outer mitochondrial membrane-resident beta-barrel protein mdm10.</text>
</comment>
<comment type="subunit">
    <text evidence="1">Component of the ER-mitochondria encounter structure (ERMES) or MDM complex, composed of mmm1, mdm10, mdm12 and mdm34.</text>
</comment>
<comment type="subcellular location">
    <subcellularLocation>
        <location evidence="1">Mitochondrion outer membrane</location>
        <topology evidence="1">Multi-pass membrane protein</topology>
    </subcellularLocation>
    <text evidence="1">The ERMES/MDM complex localizes to a few discrete foci (around 10 per single cell), that represent mitochondria-endoplasmic reticulum junctions. These foci are often found next to mtDNA nucleoids.</text>
</comment>
<comment type="domain">
    <text evidence="1">Lacks alpha-helical transmembrane segments, suggesting that it resides in the membrane via beta-sheet conformations similar to those predicted for other outer membrane proteins and porin.</text>
</comment>
<comment type="domain">
    <text evidence="1">The SMP-LTD domain is a barrel-like domain that can bind various types of glycerophospholipids in its interior and mediate their transfer between two adjacent bilayers.</text>
</comment>
<comment type="similarity">
    <text evidence="1">Belongs to the MDM34 family.</text>
</comment>
<reference key="1">
    <citation type="journal article" date="2013" name="G3 (Bethesda)">
        <title>Comparative genomics of a plant-pathogenic fungus, Pyrenophora tritici-repentis, reveals transduplication and the impact of repeat elements on pathogenicity and population divergence.</title>
        <authorList>
            <person name="Manning V.A."/>
            <person name="Pandelova I."/>
            <person name="Dhillon B."/>
            <person name="Wilhelm L.J."/>
            <person name="Goodwin S.B."/>
            <person name="Berlin A.M."/>
            <person name="Figueroa M."/>
            <person name="Freitag M."/>
            <person name="Hane J.K."/>
            <person name="Henrissat B."/>
            <person name="Holman W.H."/>
            <person name="Kodira C.D."/>
            <person name="Martin J."/>
            <person name="Oliver R.P."/>
            <person name="Robbertse B."/>
            <person name="Schackwitz W."/>
            <person name="Schwartz D.C."/>
            <person name="Spatafora J.W."/>
            <person name="Turgeon B.G."/>
            <person name="Yandava C."/>
            <person name="Young S."/>
            <person name="Zhou S."/>
            <person name="Zeng Q."/>
            <person name="Grigoriev I.V."/>
            <person name="Ma L.-J."/>
            <person name="Ciuffetti L.M."/>
        </authorList>
    </citation>
    <scope>NUCLEOTIDE SEQUENCE [LARGE SCALE GENOMIC DNA]</scope>
    <source>
        <strain>Pt-1C-BFP</strain>
    </source>
</reference>
<dbReference type="EMBL" id="DS231615">
    <property type="protein sequence ID" value="EDU39796.1"/>
    <property type="molecule type" value="Genomic_DNA"/>
</dbReference>
<dbReference type="RefSeq" id="XP_001930691.1">
    <property type="nucleotide sequence ID" value="XM_001930656.1"/>
</dbReference>
<dbReference type="STRING" id="426418.B2VS19"/>
<dbReference type="EnsemblFungi" id="EDU39796">
    <property type="protein sequence ID" value="EDU39796"/>
    <property type="gene ID" value="PTRG_00358"/>
</dbReference>
<dbReference type="GeneID" id="6338684"/>
<dbReference type="KEGG" id="ptrr:6338684"/>
<dbReference type="eggNOG" id="ENOG502QT3W">
    <property type="taxonomic scope" value="Eukaryota"/>
</dbReference>
<dbReference type="HOGENOM" id="CLU_036502_1_0_1"/>
<dbReference type="InParanoid" id="B2VS19"/>
<dbReference type="OMA" id="VFRAWSG"/>
<dbReference type="OrthoDB" id="31311at28556"/>
<dbReference type="Proteomes" id="UP000001471">
    <property type="component" value="Unassembled WGS sequence"/>
</dbReference>
<dbReference type="GO" id="GO:0032865">
    <property type="term" value="C:ERMES complex"/>
    <property type="evidence" value="ECO:0007669"/>
    <property type="project" value="UniProtKB-UniRule"/>
</dbReference>
<dbReference type="GO" id="GO:0008289">
    <property type="term" value="F:lipid binding"/>
    <property type="evidence" value="ECO:0007669"/>
    <property type="project" value="UniProtKB-KW"/>
</dbReference>
<dbReference type="GO" id="GO:0000002">
    <property type="term" value="P:mitochondrial genome maintenance"/>
    <property type="evidence" value="ECO:0007669"/>
    <property type="project" value="UniProtKB-UniRule"/>
</dbReference>
<dbReference type="GO" id="GO:1990456">
    <property type="term" value="P:mitochondrion-endoplasmic reticulum membrane tethering"/>
    <property type="evidence" value="ECO:0007669"/>
    <property type="project" value="TreeGrafter"/>
</dbReference>
<dbReference type="GO" id="GO:0015914">
    <property type="term" value="P:phospholipid transport"/>
    <property type="evidence" value="ECO:0007669"/>
    <property type="project" value="TreeGrafter"/>
</dbReference>
<dbReference type="CDD" id="cd21673">
    <property type="entry name" value="SMP_Mdm34"/>
    <property type="match status" value="1"/>
</dbReference>
<dbReference type="HAMAP" id="MF_03105">
    <property type="entry name" value="Mdm34"/>
    <property type="match status" value="1"/>
</dbReference>
<dbReference type="InterPro" id="IPR027536">
    <property type="entry name" value="Mdm34"/>
</dbReference>
<dbReference type="InterPro" id="IPR031468">
    <property type="entry name" value="SMP_LBD"/>
</dbReference>
<dbReference type="PANTHER" id="PTHR28185">
    <property type="entry name" value="MITOCHONDRIAL DISTRIBUTION AND MORPHOLOGY PROTEIN 34"/>
    <property type="match status" value="1"/>
</dbReference>
<dbReference type="PANTHER" id="PTHR28185:SF1">
    <property type="entry name" value="MITOCHONDRIAL DISTRIBUTION AND MORPHOLOGY PROTEIN 34"/>
    <property type="match status" value="1"/>
</dbReference>
<dbReference type="PROSITE" id="PS51847">
    <property type="entry name" value="SMP"/>
    <property type="match status" value="1"/>
</dbReference>
<proteinExistence type="inferred from homology"/>
<accession>B2VS19</accession>
<protein>
    <recommendedName>
        <fullName evidence="1">Mitochondrial distribution and morphology protein 34</fullName>
    </recommendedName>
</protein>